<evidence type="ECO:0000255" key="1"/>
<evidence type="ECO:0000255" key="2">
    <source>
        <dbReference type="PROSITE-ProRule" id="PRU00124"/>
    </source>
</evidence>
<evidence type="ECO:0000256" key="3">
    <source>
        <dbReference type="SAM" id="MobiDB-lite"/>
    </source>
</evidence>
<evidence type="ECO:0000269" key="4">
    <source>
    </source>
</evidence>
<evidence type="ECO:0000269" key="5">
    <source>
    </source>
</evidence>
<evidence type="ECO:0000269" key="6">
    <source>
    </source>
</evidence>
<evidence type="ECO:0000269" key="7">
    <source>
    </source>
</evidence>
<evidence type="ECO:0000269" key="8">
    <source>
    </source>
</evidence>
<evidence type="ECO:0000269" key="9">
    <source>
    </source>
</evidence>
<evidence type="ECO:0000269" key="10">
    <source>
    </source>
</evidence>
<evidence type="ECO:0000269" key="11">
    <source>
    </source>
</evidence>
<evidence type="ECO:0000269" key="12">
    <source ref="6"/>
</evidence>
<evidence type="ECO:0000303" key="13">
    <source>
    </source>
</evidence>
<evidence type="ECO:0000303" key="14">
    <source>
    </source>
</evidence>
<evidence type="ECO:0000303" key="15">
    <source>
    </source>
</evidence>
<evidence type="ECO:0000303" key="16">
    <source>
    </source>
</evidence>
<evidence type="ECO:0000303" key="17">
    <source>
    </source>
</evidence>
<evidence type="ECO:0000305" key="18"/>
<evidence type="ECO:0000305" key="19">
    <source>
    </source>
</evidence>
<evidence type="ECO:0007744" key="20">
    <source>
        <dbReference type="PDB" id="4ZRP"/>
    </source>
</evidence>
<evidence type="ECO:0007744" key="21">
    <source>
        <dbReference type="PDB" id="4ZRQ"/>
    </source>
</evidence>
<evidence type="ECO:0007829" key="22">
    <source>
        <dbReference type="PDB" id="4ZRP"/>
    </source>
</evidence>
<evidence type="ECO:0007829" key="23">
    <source>
        <dbReference type="PDB" id="4ZRQ"/>
    </source>
</evidence>
<evidence type="ECO:0007829" key="24">
    <source>
        <dbReference type="PDB" id="7QBF"/>
    </source>
</evidence>
<protein>
    <recommendedName>
        <fullName>CD320 antigen</fullName>
    </recommendedName>
    <alternativeName>
        <fullName evidence="13">8D6 antigen</fullName>
    </alternativeName>
    <alternativeName>
        <fullName evidence="13 14">FDC-signaling molecule 8D6</fullName>
        <shortName evidence="14">FDC-SM-8D6</shortName>
    </alternativeName>
    <alternativeName>
        <fullName evidence="16">Transcobalamin receptor</fullName>
        <shortName evidence="16 17">TCblR</shortName>
    </alternativeName>
    <cdAntigenName>CD320</cdAntigenName>
</protein>
<comment type="function">
    <text evidence="4 5 7 8">Receptor for transcobalamin saturated with cobalamin (TCbl) (PubMed:18779389). Plays an important role in cobalamin uptake (PubMed:18779389, PubMed:20524213). Plasma membrane protein that is expressed on follicular dendritic cells (FDC) and mediates interaction with germinal center B cells (PubMed:10727470). Functions as costimulator to promote B cell responses to antigenic stimuli; promotes B cell differentiation and proliferation (PubMed:10727470, PubMed:11418631). Germinal center-B (GC-B) cells differentiate into memory B-cells and plasma cells (PC) through interaction with T-cells and follicular dendritic cells (FDC) (PubMed:11418631). CD320 augments the proliferation of PC precursors generated by IL-10 (PubMed:11418631).</text>
</comment>
<comment type="subunit">
    <text evidence="10">Interacts (via LDL-receptor class A domains) with TCN2 (PubMed:27411955).</text>
</comment>
<comment type="interaction">
    <interactant intactId="EBI-1054562">
        <id>Q9NPF0</id>
    </interactant>
    <interactant intactId="EBI-2853005">
        <id>P20062</id>
        <label>TCN2</label>
    </interactant>
    <organismsDiffer>false</organismsDiffer>
    <experiments>11</experiments>
</comment>
<comment type="subcellular location">
    <subcellularLocation>
        <location evidence="4 5 19">Cell membrane</location>
        <topology evidence="18">Single-pass type I membrane protein</topology>
    </subcellularLocation>
</comment>
<comment type="alternative products">
    <event type="alternative splicing"/>
    <isoform>
        <id>Q9NPF0-1</id>
        <name>1</name>
        <sequence type="displayed"/>
    </isoform>
    <isoform>
        <id>Q9NPF0-2</id>
        <name>2</name>
        <sequence type="described" ref="VSP_045368"/>
    </isoform>
</comment>
<comment type="tissue specificity">
    <text evidence="4 5">Detected in the germinal center (GC) of lymphoid follicles (at protein level) (PubMed:11418631). Expressed abundantly on follicular dendritic cells (FDCs) (PubMed:10727470).</text>
</comment>
<comment type="disease" evidence="8 9 10 11">
    <disease id="DI-02979">
        <name>Methylmalonic aciduria, transient, due to transcobalamin receptor defect</name>
        <acronym>MATR</acronym>
        <description>An autosomal recessive metabolic disorder characterized by increased blood C3-acylcarnitine levels, elevated methylmalonate and homocysteine, and low uptake of transcobalamin-bound cobalamin, but normal conversion to adenosylcobalamin and methylcobalamin.</description>
        <dbReference type="MIM" id="613646"/>
    </disease>
    <text>The disease may be caused by variants affecting the gene represented in this entry.</text>
</comment>
<proteinExistence type="evidence at protein level"/>
<dbReference type="EMBL" id="AF161254">
    <property type="protein sequence ID" value="AAF61850.1"/>
    <property type="molecule type" value="mRNA"/>
</dbReference>
<dbReference type="EMBL" id="AL365455">
    <property type="protein sequence ID" value="CAB97010.1"/>
    <property type="molecule type" value="mRNA"/>
</dbReference>
<dbReference type="EMBL" id="AL136652">
    <property type="protein sequence ID" value="CAB66587.1"/>
    <property type="molecule type" value="mRNA"/>
</dbReference>
<dbReference type="EMBL" id="AY358420">
    <property type="protein sequence ID" value="AAQ88786.1"/>
    <property type="molecule type" value="mRNA"/>
</dbReference>
<dbReference type="EMBL" id="AK058014">
    <property type="status" value="NOT_ANNOTATED_CDS"/>
    <property type="molecule type" value="mRNA"/>
</dbReference>
<dbReference type="EMBL" id="AK315656">
    <property type="protein sequence ID" value="BAG38022.1"/>
    <property type="molecule type" value="mRNA"/>
</dbReference>
<dbReference type="EMBL" id="AK222623">
    <property type="protein sequence ID" value="BAD96343.1"/>
    <property type="molecule type" value="mRNA"/>
</dbReference>
<dbReference type="EMBL" id="CR457174">
    <property type="protein sequence ID" value="CAG33455.1"/>
    <property type="molecule type" value="mRNA"/>
</dbReference>
<dbReference type="EMBL" id="AC010323">
    <property type="status" value="NOT_ANNOTATED_CDS"/>
    <property type="molecule type" value="Genomic_DNA"/>
</dbReference>
<dbReference type="EMBL" id="CH471139">
    <property type="protein sequence ID" value="EAW68936.1"/>
    <property type="molecule type" value="Genomic_DNA"/>
</dbReference>
<dbReference type="EMBL" id="CH471139">
    <property type="protein sequence ID" value="EAW68939.1"/>
    <property type="molecule type" value="Genomic_DNA"/>
</dbReference>
<dbReference type="EMBL" id="BC000668">
    <property type="protein sequence ID" value="AAH00668.1"/>
    <property type="molecule type" value="mRNA"/>
</dbReference>
<dbReference type="EMBL" id="BC007083">
    <property type="protein sequence ID" value="AAH07083.1"/>
    <property type="molecule type" value="mRNA"/>
</dbReference>
<dbReference type="CCDS" id="CCDS12198.1">
    <molecule id="Q9NPF0-1"/>
</dbReference>
<dbReference type="CCDS" id="CCDS54210.1">
    <molecule id="Q9NPF0-2"/>
</dbReference>
<dbReference type="RefSeq" id="NP_001159367.1">
    <molecule id="Q9NPF0-2"/>
    <property type="nucleotide sequence ID" value="NM_001165895.2"/>
</dbReference>
<dbReference type="RefSeq" id="NP_057663.1">
    <molecule id="Q9NPF0-1"/>
    <property type="nucleotide sequence ID" value="NM_016579.4"/>
</dbReference>
<dbReference type="PDB" id="4ZRP">
    <property type="method" value="X-ray"/>
    <property type="resolution" value="2.10 A"/>
    <property type="chains" value="C/D=53-171"/>
</dbReference>
<dbReference type="PDB" id="4ZRQ">
    <property type="method" value="X-ray"/>
    <property type="resolution" value="2.60 A"/>
    <property type="chains" value="C/D=53-171"/>
</dbReference>
<dbReference type="PDB" id="7QBD">
    <property type="method" value="X-ray"/>
    <property type="resolution" value="4.18 A"/>
    <property type="chains" value="C/D=52-198"/>
</dbReference>
<dbReference type="PDB" id="7QBE">
    <property type="method" value="X-ray"/>
    <property type="resolution" value="3.00 A"/>
    <property type="chains" value="B/D=52-198"/>
</dbReference>
<dbReference type="PDB" id="7QBF">
    <property type="method" value="X-ray"/>
    <property type="resolution" value="1.85 A"/>
    <property type="chains" value="C=52-198"/>
</dbReference>
<dbReference type="PDB" id="7QBG">
    <property type="method" value="X-ray"/>
    <property type="resolution" value="2.69 A"/>
    <property type="chains" value="B/D=52-198"/>
</dbReference>
<dbReference type="PDBsum" id="4ZRP"/>
<dbReference type="PDBsum" id="4ZRQ"/>
<dbReference type="PDBsum" id="7QBD"/>
<dbReference type="PDBsum" id="7QBE"/>
<dbReference type="PDBsum" id="7QBF"/>
<dbReference type="PDBsum" id="7QBG"/>
<dbReference type="SMR" id="Q9NPF0"/>
<dbReference type="BioGRID" id="119444">
    <property type="interactions" value="63"/>
</dbReference>
<dbReference type="FunCoup" id="Q9NPF0">
    <property type="interactions" value="489"/>
</dbReference>
<dbReference type="IntAct" id="Q9NPF0">
    <property type="interactions" value="47"/>
</dbReference>
<dbReference type="STRING" id="9606.ENSP00000301458"/>
<dbReference type="GlyCosmos" id="Q9NPF0">
    <property type="glycosylation" value="3 sites, No reported glycans"/>
</dbReference>
<dbReference type="GlyGen" id="Q9NPF0">
    <property type="glycosylation" value="4 sites, 1 O-linked glycan (1 site)"/>
</dbReference>
<dbReference type="iPTMnet" id="Q9NPF0"/>
<dbReference type="PhosphoSitePlus" id="Q9NPF0"/>
<dbReference type="SwissPalm" id="Q9NPF0"/>
<dbReference type="BioMuta" id="CD320"/>
<dbReference type="DMDM" id="74734303"/>
<dbReference type="jPOST" id="Q9NPF0"/>
<dbReference type="MassIVE" id="Q9NPF0"/>
<dbReference type="PaxDb" id="9606-ENSP00000301458"/>
<dbReference type="PeptideAtlas" id="Q9NPF0"/>
<dbReference type="ProteomicsDB" id="27153"/>
<dbReference type="ProteomicsDB" id="81981">
    <molecule id="Q9NPF0-1"/>
</dbReference>
<dbReference type="Pumba" id="Q9NPF0"/>
<dbReference type="Antibodypedia" id="3048">
    <property type="antibodies" value="163 antibodies from 25 providers"/>
</dbReference>
<dbReference type="DNASU" id="51293"/>
<dbReference type="Ensembl" id="ENST00000301458.10">
    <molecule id="Q9NPF0-1"/>
    <property type="protein sequence ID" value="ENSP00000301458.4"/>
    <property type="gene ID" value="ENSG00000167775.11"/>
</dbReference>
<dbReference type="Ensembl" id="ENST00000537716.6">
    <molecule id="Q9NPF0-2"/>
    <property type="protein sequence ID" value="ENSP00000437697.1"/>
    <property type="gene ID" value="ENSG00000167775.11"/>
</dbReference>
<dbReference type="GeneID" id="51293"/>
<dbReference type="KEGG" id="hsa:51293"/>
<dbReference type="MANE-Select" id="ENST00000301458.10">
    <property type="protein sequence ID" value="ENSP00000301458.4"/>
    <property type="RefSeq nucleotide sequence ID" value="NM_016579.4"/>
    <property type="RefSeq protein sequence ID" value="NP_057663.1"/>
</dbReference>
<dbReference type="UCSC" id="uc002mjj.3">
    <molecule id="Q9NPF0-1"/>
    <property type="organism name" value="human"/>
</dbReference>
<dbReference type="AGR" id="HGNC:16692"/>
<dbReference type="CTD" id="51293"/>
<dbReference type="DisGeNET" id="51293"/>
<dbReference type="GeneCards" id="CD320"/>
<dbReference type="HGNC" id="HGNC:16692">
    <property type="gene designation" value="CD320"/>
</dbReference>
<dbReference type="HPA" id="ENSG00000167775">
    <property type="expression patterns" value="Low tissue specificity"/>
</dbReference>
<dbReference type="MalaCards" id="CD320"/>
<dbReference type="MIM" id="606475">
    <property type="type" value="gene"/>
</dbReference>
<dbReference type="MIM" id="613646">
    <property type="type" value="phenotype"/>
</dbReference>
<dbReference type="neXtProt" id="NX_Q9NPF0"/>
<dbReference type="OpenTargets" id="ENSG00000167775"/>
<dbReference type="Orphanet" id="280183">
    <property type="disease" value="Methylmalonic aciduria due to transcobalamin receptor defect"/>
</dbReference>
<dbReference type="PharmGKB" id="PA142672142"/>
<dbReference type="VEuPathDB" id="HostDB:ENSG00000167775"/>
<dbReference type="eggNOG" id="KOG1215">
    <property type="taxonomic scope" value="Eukaryota"/>
</dbReference>
<dbReference type="GeneTree" id="ENSGT00730000111436"/>
<dbReference type="HOGENOM" id="CLU_094249_0_0_1"/>
<dbReference type="InParanoid" id="Q9NPF0"/>
<dbReference type="OMA" id="IKPCAQD"/>
<dbReference type="OrthoDB" id="9990982at2759"/>
<dbReference type="PAN-GO" id="Q9NPF0">
    <property type="GO annotations" value="1 GO annotation based on evolutionary models"/>
</dbReference>
<dbReference type="PhylomeDB" id="Q9NPF0"/>
<dbReference type="TreeFam" id="TF337215"/>
<dbReference type="PathwayCommons" id="Q9NPF0"/>
<dbReference type="Reactome" id="R-HSA-3359485">
    <property type="pathway name" value="Defective CD320 causes MMATC"/>
</dbReference>
<dbReference type="Reactome" id="R-HSA-9758890">
    <property type="pathway name" value="Transport of RCbl within the body"/>
</dbReference>
<dbReference type="SABIO-RK" id="Q9NPF0"/>
<dbReference type="SignaLink" id="Q9NPF0"/>
<dbReference type="BioGRID-ORCS" id="51293">
    <property type="hits" value="17 hits in 1155 CRISPR screens"/>
</dbReference>
<dbReference type="ChiTaRS" id="CD320">
    <property type="organism name" value="human"/>
</dbReference>
<dbReference type="GeneWiki" id="CD320"/>
<dbReference type="GenomeRNAi" id="51293"/>
<dbReference type="Pharos" id="Q9NPF0">
    <property type="development level" value="Tbio"/>
</dbReference>
<dbReference type="PRO" id="PR:Q9NPF0"/>
<dbReference type="Proteomes" id="UP000005640">
    <property type="component" value="Chromosome 19"/>
</dbReference>
<dbReference type="RNAct" id="Q9NPF0">
    <property type="molecule type" value="protein"/>
</dbReference>
<dbReference type="Bgee" id="ENSG00000167775">
    <property type="expression patterns" value="Expressed in mucosa of transverse colon and 188 other cell types or tissues"/>
</dbReference>
<dbReference type="ExpressionAtlas" id="Q9NPF0">
    <property type="expression patterns" value="baseline and differential"/>
</dbReference>
<dbReference type="GO" id="GO:0005783">
    <property type="term" value="C:endoplasmic reticulum"/>
    <property type="evidence" value="ECO:0000314"/>
    <property type="project" value="LIFEdb"/>
</dbReference>
<dbReference type="GO" id="GO:0016020">
    <property type="term" value="C:membrane"/>
    <property type="evidence" value="ECO:0007005"/>
    <property type="project" value="UniProtKB"/>
</dbReference>
<dbReference type="GO" id="GO:0005886">
    <property type="term" value="C:plasma membrane"/>
    <property type="evidence" value="ECO:0000314"/>
    <property type="project" value="UniProtKB"/>
</dbReference>
<dbReference type="GO" id="GO:0005509">
    <property type="term" value="F:calcium ion binding"/>
    <property type="evidence" value="ECO:0000314"/>
    <property type="project" value="UniProtKB"/>
</dbReference>
<dbReference type="GO" id="GO:0038024">
    <property type="term" value="F:cargo receptor activity"/>
    <property type="evidence" value="ECO:0000269"/>
    <property type="project" value="Reactome"/>
</dbReference>
<dbReference type="GO" id="GO:0031419">
    <property type="term" value="F:cobalamin binding"/>
    <property type="evidence" value="ECO:0000314"/>
    <property type="project" value="MGI"/>
</dbReference>
<dbReference type="GO" id="GO:0008083">
    <property type="term" value="F:growth factor activity"/>
    <property type="evidence" value="ECO:0007669"/>
    <property type="project" value="UniProtKB-KW"/>
</dbReference>
<dbReference type="GO" id="GO:0031296">
    <property type="term" value="P:B cell costimulation"/>
    <property type="evidence" value="ECO:0000315"/>
    <property type="project" value="UniProtKB"/>
</dbReference>
<dbReference type="GO" id="GO:0015889">
    <property type="term" value="P:cobalamin transport"/>
    <property type="evidence" value="ECO:0000315"/>
    <property type="project" value="UniProtKB"/>
</dbReference>
<dbReference type="GO" id="GO:0030890">
    <property type="term" value="P:positive regulation of B cell proliferation"/>
    <property type="evidence" value="ECO:0000315"/>
    <property type="project" value="UniProtKB"/>
</dbReference>
<dbReference type="GO" id="GO:0030656">
    <property type="term" value="P:regulation of vitamin metabolic process"/>
    <property type="evidence" value="ECO:0007669"/>
    <property type="project" value="Ensembl"/>
</dbReference>
<dbReference type="CDD" id="cd00112">
    <property type="entry name" value="LDLa"/>
    <property type="match status" value="2"/>
</dbReference>
<dbReference type="FunFam" id="4.10.400.10:FF:000002">
    <property type="entry name" value="Low-density lipoprotein receptor-related protein 1"/>
    <property type="match status" value="2"/>
</dbReference>
<dbReference type="Gene3D" id="4.10.400.10">
    <property type="entry name" value="Low-density Lipoprotein Receptor"/>
    <property type="match status" value="2"/>
</dbReference>
<dbReference type="InterPro" id="IPR036055">
    <property type="entry name" value="LDL_receptor-like_sf"/>
</dbReference>
<dbReference type="InterPro" id="IPR050685">
    <property type="entry name" value="LDLR"/>
</dbReference>
<dbReference type="InterPro" id="IPR023415">
    <property type="entry name" value="LDLR_class-A_CS"/>
</dbReference>
<dbReference type="InterPro" id="IPR002172">
    <property type="entry name" value="LDrepeatLR_classA_rpt"/>
</dbReference>
<dbReference type="PANTHER" id="PTHR24270:SF52">
    <property type="entry name" value="CD320 ANTIGEN"/>
    <property type="match status" value="1"/>
</dbReference>
<dbReference type="PANTHER" id="PTHR24270">
    <property type="entry name" value="LOW-DENSITY LIPOPROTEIN RECEPTOR-RELATED"/>
    <property type="match status" value="1"/>
</dbReference>
<dbReference type="Pfam" id="PF00057">
    <property type="entry name" value="Ldl_recept_a"/>
    <property type="match status" value="2"/>
</dbReference>
<dbReference type="PRINTS" id="PR00261">
    <property type="entry name" value="LDLRECEPTOR"/>
</dbReference>
<dbReference type="SMART" id="SM00192">
    <property type="entry name" value="LDLa"/>
    <property type="match status" value="2"/>
</dbReference>
<dbReference type="SUPFAM" id="SSF57424">
    <property type="entry name" value="LDL receptor-like module"/>
    <property type="match status" value="2"/>
</dbReference>
<dbReference type="PROSITE" id="PS01209">
    <property type="entry name" value="LDLRA_1"/>
    <property type="match status" value="2"/>
</dbReference>
<dbReference type="PROSITE" id="PS50068">
    <property type="entry name" value="LDLRA_2"/>
    <property type="match status" value="2"/>
</dbReference>
<accession>Q9NPF0</accession>
<accession>B2RDS5</accession>
<accession>D6W668</accession>
<accession>F5H6D3</accession>
<accession>Q53HF7</accession>
<keyword id="KW-0002">3D-structure</keyword>
<keyword id="KW-0025">Alternative splicing</keyword>
<keyword id="KW-0106">Calcium</keyword>
<keyword id="KW-1003">Cell membrane</keyword>
<keyword id="KW-0903">Direct protein sequencing</keyword>
<keyword id="KW-0225">Disease variant</keyword>
<keyword id="KW-1015">Disulfide bond</keyword>
<keyword id="KW-0325">Glycoprotein</keyword>
<keyword id="KW-0339">Growth factor</keyword>
<keyword id="KW-0472">Membrane</keyword>
<keyword id="KW-0479">Metal-binding</keyword>
<keyword id="KW-1267">Proteomics identification</keyword>
<keyword id="KW-1185">Reference proteome</keyword>
<keyword id="KW-0677">Repeat</keyword>
<keyword id="KW-0732">Signal</keyword>
<keyword id="KW-0812">Transmembrane</keyword>
<keyword id="KW-1133">Transmembrane helix</keyword>
<organism>
    <name type="scientific">Homo sapiens</name>
    <name type="common">Human</name>
    <dbReference type="NCBI Taxonomy" id="9606"/>
    <lineage>
        <taxon>Eukaryota</taxon>
        <taxon>Metazoa</taxon>
        <taxon>Chordata</taxon>
        <taxon>Craniata</taxon>
        <taxon>Vertebrata</taxon>
        <taxon>Euteleostomi</taxon>
        <taxon>Mammalia</taxon>
        <taxon>Eutheria</taxon>
        <taxon>Euarchontoglires</taxon>
        <taxon>Primates</taxon>
        <taxon>Haplorrhini</taxon>
        <taxon>Catarrhini</taxon>
        <taxon>Hominidae</taxon>
        <taxon>Homo</taxon>
    </lineage>
</organism>
<gene>
    <name type="primary">CD320</name>
    <name type="synonym">8D6A</name>
    <name type="ORF">UNQ198/PRO224</name>
</gene>
<feature type="signal peptide" evidence="6">
    <location>
        <begin position="1"/>
        <end position="35"/>
    </location>
</feature>
<feature type="chain" id="PRO_0000045798" description="CD320 antigen">
    <location>
        <begin position="36"/>
        <end position="282"/>
    </location>
</feature>
<feature type="topological domain" description="Extracellular" evidence="1">
    <location>
        <begin position="36"/>
        <end position="229"/>
    </location>
</feature>
<feature type="transmembrane region" description="Helical" evidence="1">
    <location>
        <begin position="230"/>
        <end position="250"/>
    </location>
</feature>
<feature type="topological domain" description="Cytoplasmic" evidence="1">
    <location>
        <begin position="251"/>
        <end position="282"/>
    </location>
</feature>
<feature type="domain" description="LDL-receptor class A 1" evidence="2">
    <location>
        <begin position="53"/>
        <end position="90"/>
    </location>
</feature>
<feature type="domain" description="LDL-receptor class A 2" evidence="2">
    <location>
        <begin position="131"/>
        <end position="168"/>
    </location>
</feature>
<feature type="region of interest" description="Disordered" evidence="3">
    <location>
        <begin position="199"/>
        <end position="223"/>
    </location>
</feature>
<feature type="compositionally biased region" description="Polar residues" evidence="3">
    <location>
        <begin position="210"/>
        <end position="223"/>
    </location>
</feature>
<feature type="binding site" evidence="10 20">
    <location>
        <position position="72"/>
    </location>
    <ligand>
        <name>Ca(2+)</name>
        <dbReference type="ChEBI" id="CHEBI:29108"/>
        <label>1</label>
    </ligand>
</feature>
<feature type="binding site" evidence="10 20">
    <location>
        <position position="75"/>
    </location>
    <ligand>
        <name>Ca(2+)</name>
        <dbReference type="ChEBI" id="CHEBI:29108"/>
        <label>1</label>
    </ligand>
</feature>
<feature type="binding site" evidence="10 20">
    <location>
        <position position="77"/>
    </location>
    <ligand>
        <name>Ca(2+)</name>
        <dbReference type="ChEBI" id="CHEBI:29108"/>
        <label>1</label>
    </ligand>
</feature>
<feature type="binding site" evidence="10 20">
    <location>
        <position position="79"/>
    </location>
    <ligand>
        <name>Ca(2+)</name>
        <dbReference type="ChEBI" id="CHEBI:29108"/>
        <label>1</label>
    </ligand>
</feature>
<feature type="binding site" evidence="10 20">
    <location>
        <position position="85"/>
    </location>
    <ligand>
        <name>Ca(2+)</name>
        <dbReference type="ChEBI" id="CHEBI:29108"/>
        <label>1</label>
    </ligand>
</feature>
<feature type="binding site" evidence="10 20">
    <location>
        <position position="86"/>
    </location>
    <ligand>
        <name>Ca(2+)</name>
        <dbReference type="ChEBI" id="CHEBI:29108"/>
        <label>1</label>
    </ligand>
</feature>
<feature type="binding site" evidence="10 20">
    <location>
        <position position="150"/>
    </location>
    <ligand>
        <name>Ca(2+)</name>
        <dbReference type="ChEBI" id="CHEBI:29108"/>
        <label>2</label>
    </ligand>
</feature>
<feature type="binding site" evidence="10 20">
    <location>
        <position position="153"/>
    </location>
    <ligand>
        <name>Ca(2+)</name>
        <dbReference type="ChEBI" id="CHEBI:29108"/>
        <label>2</label>
    </ligand>
</feature>
<feature type="binding site" evidence="10 20">
    <location>
        <position position="155"/>
    </location>
    <ligand>
        <name>Ca(2+)</name>
        <dbReference type="ChEBI" id="CHEBI:29108"/>
        <label>2</label>
    </ligand>
</feature>
<feature type="binding site" evidence="10 20">
    <location>
        <position position="157"/>
    </location>
    <ligand>
        <name>Ca(2+)</name>
        <dbReference type="ChEBI" id="CHEBI:29108"/>
        <label>2</label>
    </ligand>
</feature>
<feature type="binding site" evidence="10 20">
    <location>
        <position position="163"/>
    </location>
    <ligand>
        <name>Ca(2+)</name>
        <dbReference type="ChEBI" id="CHEBI:29108"/>
        <label>2</label>
    </ligand>
</feature>
<feature type="binding site" evidence="10 20">
    <location>
        <position position="164"/>
    </location>
    <ligand>
        <name>Ca(2+)</name>
        <dbReference type="ChEBI" id="CHEBI:29108"/>
        <label>2</label>
    </ligand>
</feature>
<feature type="glycosylation site" description="N-linked (GlcNAc...) asparagine" evidence="1">
    <location>
        <position position="126"/>
    </location>
</feature>
<feature type="glycosylation site" description="N-linked (GlcNAc...) asparagine" evidence="1">
    <location>
        <position position="195"/>
    </location>
</feature>
<feature type="glycosylation site" description="N-linked (GlcNAc...) asparagine" evidence="1">
    <location>
        <position position="213"/>
    </location>
</feature>
<feature type="disulfide bond" evidence="2 10 20 21">
    <location>
        <begin position="54"/>
        <end position="67"/>
    </location>
</feature>
<feature type="disulfide bond" evidence="2 10 20 21">
    <location>
        <begin position="61"/>
        <end position="80"/>
    </location>
</feature>
<feature type="disulfide bond" evidence="2 10 20">
    <location>
        <begin position="74"/>
        <end position="89"/>
    </location>
</feature>
<feature type="disulfide bond" evidence="2 10 20 21">
    <location>
        <begin position="132"/>
        <end position="145"/>
    </location>
</feature>
<feature type="disulfide bond" evidence="2 10 20 21">
    <location>
        <begin position="139"/>
        <end position="158"/>
    </location>
</feature>
<feature type="disulfide bond" evidence="2 10 20 21">
    <location>
        <begin position="152"/>
        <end position="167"/>
    </location>
</feature>
<feature type="splice variant" id="VSP_045368" description="In isoform 2." evidence="15">
    <location>
        <begin position="49"/>
        <end position="90"/>
    </location>
</feature>
<feature type="sequence variant" id="VAR_047315" description="In dbSNP:rs2232775." evidence="12">
    <original>Q</original>
    <variation>R</variation>
    <location>
        <position position="8"/>
    </location>
</feature>
<feature type="sequence variant" id="VAR_064080" description="In MATR; uncertain significance; decreased function in cobalamin transport; does not affect stability; does not affect interaction with TCN2; dbSNP:rs150384171." evidence="8 9 10 11">
    <location>
        <position position="88"/>
    </location>
</feature>
<feature type="sequence variant" id="VAR_077921" evidence="8">
    <original>S</original>
    <variation>G</variation>
    <location>
        <position position="142"/>
    </location>
</feature>
<feature type="sequence variant" id="VAR_047316" description="In dbSNP:rs2336573." evidence="8">
    <original>G</original>
    <variation>R</variation>
    <location>
        <position position="220"/>
    </location>
</feature>
<feature type="strand" evidence="24">
    <location>
        <begin position="58"/>
        <end position="60"/>
    </location>
</feature>
<feature type="turn" evidence="24">
    <location>
        <begin position="62"/>
        <end position="64"/>
    </location>
</feature>
<feature type="strand" evidence="24">
    <location>
        <begin position="67"/>
        <end position="69"/>
    </location>
</feature>
<feature type="helix" evidence="24">
    <location>
        <begin position="70"/>
        <end position="72"/>
    </location>
</feature>
<feature type="strand" evidence="24">
    <location>
        <begin position="75"/>
        <end position="77"/>
    </location>
</feature>
<feature type="strand" evidence="22">
    <location>
        <begin position="80"/>
        <end position="82"/>
    </location>
</feature>
<feature type="helix" evidence="24">
    <location>
        <begin position="84"/>
        <end position="86"/>
    </location>
</feature>
<feature type="strand" evidence="24">
    <location>
        <begin position="136"/>
        <end position="138"/>
    </location>
</feature>
<feature type="strand" evidence="23">
    <location>
        <begin position="140"/>
        <end position="143"/>
    </location>
</feature>
<feature type="strand" evidence="24">
    <location>
        <begin position="145"/>
        <end position="147"/>
    </location>
</feature>
<feature type="helix" evidence="24">
    <location>
        <begin position="148"/>
        <end position="150"/>
    </location>
</feature>
<feature type="strand" evidence="24">
    <location>
        <begin position="153"/>
        <end position="155"/>
    </location>
</feature>
<feature type="helix" evidence="24">
    <location>
        <begin position="162"/>
        <end position="164"/>
    </location>
</feature>
<sequence>MSGGWMAQVGAWRTGALGLALLLLLGLGLGLEAAASPLSTPTSAQAAGPSSGSCPPTKFQCRTSGLCVPLTWRCDRDLDCSDGSDEEECRIEPCTQKGQCPPPPGLPCPCTGVSDCSGGTDKKLRNCSRLACLAGELRCTLSDDCIPLTWRCDGHPDCPDSSDELGCGTNEILPEGDATTMGPPVTLESVTSLRNATTMGPPVTLESVPSVGNATSSSAGDQSGSPTAYGVIAAAAVLSASLVTATLLLLSWLRAQERLRPLGLLVAMKESLLLSEQKTSLP</sequence>
<name>CD320_HUMAN</name>
<reference key="1">
    <citation type="journal article" date="2000" name="J. Exp. Med.">
        <title>Identification of a human follicular dendritic cell molecule that stimulates germinal center B cell growth.</title>
        <authorList>
            <person name="Li L."/>
            <person name="Zhang X."/>
            <person name="Kovacic S."/>
            <person name="Long A.J."/>
            <person name="Bourque K."/>
            <person name="Wood C.R."/>
            <person name="Choi Y.S."/>
        </authorList>
    </citation>
    <scope>NUCLEOTIDE SEQUENCE [MRNA] (ISOFORM 1)</scope>
    <scope>SUBCELLULAR LOCATION</scope>
    <scope>FUNCTION</scope>
    <scope>TISSUE SPECIFICITY</scope>
</reference>
<reference key="2">
    <citation type="submission" date="2000-07" db="EMBL/GenBank/DDBJ databases">
        <authorList>
            <consortium name="The European IMAGE consortium"/>
        </authorList>
    </citation>
    <scope>NUCLEOTIDE SEQUENCE [LARGE SCALE MRNA] (ISOFORM 1)</scope>
</reference>
<reference key="3">
    <citation type="journal article" date="2001" name="Genome Res.">
        <title>Towards a catalog of human genes and proteins: sequencing and analysis of 500 novel complete protein coding human cDNAs.</title>
        <authorList>
            <person name="Wiemann S."/>
            <person name="Weil B."/>
            <person name="Wellenreuther R."/>
            <person name="Gassenhuber J."/>
            <person name="Glassl S."/>
            <person name="Ansorge W."/>
            <person name="Boecher M."/>
            <person name="Bloecker H."/>
            <person name="Bauersachs S."/>
            <person name="Blum H."/>
            <person name="Lauber J."/>
            <person name="Duesterhoeft A."/>
            <person name="Beyer A."/>
            <person name="Koehrer K."/>
            <person name="Strack N."/>
            <person name="Mewes H.-W."/>
            <person name="Ottenwaelder B."/>
            <person name="Obermaier B."/>
            <person name="Tampe J."/>
            <person name="Heubner D."/>
            <person name="Wambutt R."/>
            <person name="Korn B."/>
            <person name="Klein M."/>
            <person name="Poustka A."/>
        </authorList>
    </citation>
    <scope>NUCLEOTIDE SEQUENCE [LARGE SCALE MRNA] (ISOFORM 1)</scope>
    <source>
        <tissue>Brain</tissue>
    </source>
</reference>
<reference key="4">
    <citation type="journal article" date="2003" name="Genome Res.">
        <title>The secreted protein discovery initiative (SPDI), a large-scale effort to identify novel human secreted and transmembrane proteins: a bioinformatics assessment.</title>
        <authorList>
            <person name="Clark H.F."/>
            <person name="Gurney A.L."/>
            <person name="Abaya E."/>
            <person name="Baker K."/>
            <person name="Baldwin D.T."/>
            <person name="Brush J."/>
            <person name="Chen J."/>
            <person name="Chow B."/>
            <person name="Chui C."/>
            <person name="Crowley C."/>
            <person name="Currell B."/>
            <person name="Deuel B."/>
            <person name="Dowd P."/>
            <person name="Eaton D."/>
            <person name="Foster J.S."/>
            <person name="Grimaldi C."/>
            <person name="Gu Q."/>
            <person name="Hass P.E."/>
            <person name="Heldens S."/>
            <person name="Huang A."/>
            <person name="Kim H.S."/>
            <person name="Klimowski L."/>
            <person name="Jin Y."/>
            <person name="Johnson S."/>
            <person name="Lee J."/>
            <person name="Lewis L."/>
            <person name="Liao D."/>
            <person name="Mark M.R."/>
            <person name="Robbie E."/>
            <person name="Sanchez C."/>
            <person name="Schoenfeld J."/>
            <person name="Seshagiri S."/>
            <person name="Simmons L."/>
            <person name="Singh J."/>
            <person name="Smith V."/>
            <person name="Stinson J."/>
            <person name="Vagts A."/>
            <person name="Vandlen R.L."/>
            <person name="Watanabe C."/>
            <person name="Wieand D."/>
            <person name="Woods K."/>
            <person name="Xie M.-H."/>
            <person name="Yansura D.G."/>
            <person name="Yi S."/>
            <person name="Yu G."/>
            <person name="Yuan J."/>
            <person name="Zhang M."/>
            <person name="Zhang Z."/>
            <person name="Goddard A.D."/>
            <person name="Wood W.I."/>
            <person name="Godowski P.J."/>
            <person name="Gray A.M."/>
        </authorList>
    </citation>
    <scope>NUCLEOTIDE SEQUENCE [LARGE SCALE MRNA] (ISOFORM 1)</scope>
</reference>
<reference key="5">
    <citation type="journal article" date="2004" name="Nat. Genet.">
        <title>Complete sequencing and characterization of 21,243 full-length human cDNAs.</title>
        <authorList>
            <person name="Ota T."/>
            <person name="Suzuki Y."/>
            <person name="Nishikawa T."/>
            <person name="Otsuki T."/>
            <person name="Sugiyama T."/>
            <person name="Irie R."/>
            <person name="Wakamatsu A."/>
            <person name="Hayashi K."/>
            <person name="Sato H."/>
            <person name="Nagai K."/>
            <person name="Kimura K."/>
            <person name="Makita H."/>
            <person name="Sekine M."/>
            <person name="Obayashi M."/>
            <person name="Nishi T."/>
            <person name="Shibahara T."/>
            <person name="Tanaka T."/>
            <person name="Ishii S."/>
            <person name="Yamamoto J."/>
            <person name="Saito K."/>
            <person name="Kawai Y."/>
            <person name="Isono Y."/>
            <person name="Nakamura Y."/>
            <person name="Nagahari K."/>
            <person name="Murakami K."/>
            <person name="Yasuda T."/>
            <person name="Iwayanagi T."/>
            <person name="Wagatsuma M."/>
            <person name="Shiratori A."/>
            <person name="Sudo H."/>
            <person name="Hosoiri T."/>
            <person name="Kaku Y."/>
            <person name="Kodaira H."/>
            <person name="Kondo H."/>
            <person name="Sugawara M."/>
            <person name="Takahashi M."/>
            <person name="Kanda K."/>
            <person name="Yokoi T."/>
            <person name="Furuya T."/>
            <person name="Kikkawa E."/>
            <person name="Omura Y."/>
            <person name="Abe K."/>
            <person name="Kamihara K."/>
            <person name="Katsuta N."/>
            <person name="Sato K."/>
            <person name="Tanikawa M."/>
            <person name="Yamazaki M."/>
            <person name="Ninomiya K."/>
            <person name="Ishibashi T."/>
            <person name="Yamashita H."/>
            <person name="Murakawa K."/>
            <person name="Fujimori K."/>
            <person name="Tanai H."/>
            <person name="Kimata M."/>
            <person name="Watanabe M."/>
            <person name="Hiraoka S."/>
            <person name="Chiba Y."/>
            <person name="Ishida S."/>
            <person name="Ono Y."/>
            <person name="Takiguchi S."/>
            <person name="Watanabe S."/>
            <person name="Yosida M."/>
            <person name="Hotuta T."/>
            <person name="Kusano J."/>
            <person name="Kanehori K."/>
            <person name="Takahashi-Fujii A."/>
            <person name="Hara H."/>
            <person name="Tanase T.-O."/>
            <person name="Nomura Y."/>
            <person name="Togiya S."/>
            <person name="Komai F."/>
            <person name="Hara R."/>
            <person name="Takeuchi K."/>
            <person name="Arita M."/>
            <person name="Imose N."/>
            <person name="Musashino K."/>
            <person name="Yuuki H."/>
            <person name="Oshima A."/>
            <person name="Sasaki N."/>
            <person name="Aotsuka S."/>
            <person name="Yoshikawa Y."/>
            <person name="Matsunawa H."/>
            <person name="Ichihara T."/>
            <person name="Shiohata N."/>
            <person name="Sano S."/>
            <person name="Moriya S."/>
            <person name="Momiyama H."/>
            <person name="Satoh N."/>
            <person name="Takami S."/>
            <person name="Terashima Y."/>
            <person name="Suzuki O."/>
            <person name="Nakagawa S."/>
            <person name="Senoh A."/>
            <person name="Mizoguchi H."/>
            <person name="Goto Y."/>
            <person name="Shimizu F."/>
            <person name="Wakebe H."/>
            <person name="Hishigaki H."/>
            <person name="Watanabe T."/>
            <person name="Sugiyama A."/>
            <person name="Takemoto M."/>
            <person name="Kawakami B."/>
            <person name="Yamazaki M."/>
            <person name="Watanabe K."/>
            <person name="Kumagai A."/>
            <person name="Itakura S."/>
            <person name="Fukuzumi Y."/>
            <person name="Fujimori Y."/>
            <person name="Komiyama M."/>
            <person name="Tashiro H."/>
            <person name="Tanigami A."/>
            <person name="Fujiwara T."/>
            <person name="Ono T."/>
            <person name="Yamada K."/>
            <person name="Fujii Y."/>
            <person name="Ozaki K."/>
            <person name="Hirao M."/>
            <person name="Ohmori Y."/>
            <person name="Kawabata A."/>
            <person name="Hikiji T."/>
            <person name="Kobatake N."/>
            <person name="Inagaki H."/>
            <person name="Ikema Y."/>
            <person name="Okamoto S."/>
            <person name="Okitani R."/>
            <person name="Kawakami T."/>
            <person name="Noguchi S."/>
            <person name="Itoh T."/>
            <person name="Shigeta K."/>
            <person name="Senba T."/>
            <person name="Matsumura K."/>
            <person name="Nakajima Y."/>
            <person name="Mizuno T."/>
            <person name="Morinaga M."/>
            <person name="Sasaki M."/>
            <person name="Togashi T."/>
            <person name="Oyama M."/>
            <person name="Hata H."/>
            <person name="Watanabe M."/>
            <person name="Komatsu T."/>
            <person name="Mizushima-Sugano J."/>
            <person name="Satoh T."/>
            <person name="Shirai Y."/>
            <person name="Takahashi Y."/>
            <person name="Nakagawa K."/>
            <person name="Okumura K."/>
            <person name="Nagase T."/>
            <person name="Nomura N."/>
            <person name="Kikuchi H."/>
            <person name="Masuho Y."/>
            <person name="Yamashita R."/>
            <person name="Nakai K."/>
            <person name="Yada T."/>
            <person name="Nakamura Y."/>
            <person name="Ohara O."/>
            <person name="Isogai T."/>
            <person name="Sugano S."/>
        </authorList>
    </citation>
    <scope>NUCLEOTIDE SEQUENCE [LARGE SCALE MRNA] (ISOFORMS 1 AND 2)</scope>
    <source>
        <tissue>Gastric mucosa</tissue>
        <tissue>Mammary gland</tissue>
    </source>
</reference>
<reference key="6">
    <citation type="submission" date="2005-04" db="EMBL/GenBank/DDBJ databases">
        <authorList>
            <person name="Suzuki Y."/>
            <person name="Sugano S."/>
            <person name="Totoki Y."/>
            <person name="Toyoda A."/>
            <person name="Takeda T."/>
            <person name="Sakaki Y."/>
            <person name="Tanaka A."/>
            <person name="Yokoyama S."/>
        </authorList>
    </citation>
    <scope>NUCLEOTIDE SEQUENCE [LARGE SCALE MRNA] (ISOFORM 1)</scope>
    <scope>VARIANT ARG-8</scope>
    <source>
        <tissue>Coronary artery</tissue>
    </source>
</reference>
<reference key="7">
    <citation type="submission" date="2004-06" db="EMBL/GenBank/DDBJ databases">
        <title>Cloning of human full open reading frames in Gateway(TM) system entry vector (pDONR201).</title>
        <authorList>
            <person name="Ebert L."/>
            <person name="Schick M."/>
            <person name="Neubert P."/>
            <person name="Schatten R."/>
            <person name="Henze S."/>
            <person name="Korn B."/>
        </authorList>
    </citation>
    <scope>NUCLEOTIDE SEQUENCE [LARGE SCALE MRNA] (ISOFORM 1)</scope>
</reference>
<reference key="8">
    <citation type="journal article" date="2004" name="Nature">
        <title>The DNA sequence and biology of human chromosome 19.</title>
        <authorList>
            <person name="Grimwood J."/>
            <person name="Gordon L.A."/>
            <person name="Olsen A.S."/>
            <person name="Terry A."/>
            <person name="Schmutz J."/>
            <person name="Lamerdin J.E."/>
            <person name="Hellsten U."/>
            <person name="Goodstein D."/>
            <person name="Couronne O."/>
            <person name="Tran-Gyamfi M."/>
            <person name="Aerts A."/>
            <person name="Altherr M."/>
            <person name="Ashworth L."/>
            <person name="Bajorek E."/>
            <person name="Black S."/>
            <person name="Branscomb E."/>
            <person name="Caenepeel S."/>
            <person name="Carrano A.V."/>
            <person name="Caoile C."/>
            <person name="Chan Y.M."/>
            <person name="Christensen M."/>
            <person name="Cleland C.A."/>
            <person name="Copeland A."/>
            <person name="Dalin E."/>
            <person name="Dehal P."/>
            <person name="Denys M."/>
            <person name="Detter J.C."/>
            <person name="Escobar J."/>
            <person name="Flowers D."/>
            <person name="Fotopulos D."/>
            <person name="Garcia C."/>
            <person name="Georgescu A.M."/>
            <person name="Glavina T."/>
            <person name="Gomez M."/>
            <person name="Gonzales E."/>
            <person name="Groza M."/>
            <person name="Hammon N."/>
            <person name="Hawkins T."/>
            <person name="Haydu L."/>
            <person name="Ho I."/>
            <person name="Huang W."/>
            <person name="Israni S."/>
            <person name="Jett J."/>
            <person name="Kadner K."/>
            <person name="Kimball H."/>
            <person name="Kobayashi A."/>
            <person name="Larionov V."/>
            <person name="Leem S.-H."/>
            <person name="Lopez F."/>
            <person name="Lou Y."/>
            <person name="Lowry S."/>
            <person name="Malfatti S."/>
            <person name="Martinez D."/>
            <person name="McCready P.M."/>
            <person name="Medina C."/>
            <person name="Morgan J."/>
            <person name="Nelson K."/>
            <person name="Nolan M."/>
            <person name="Ovcharenko I."/>
            <person name="Pitluck S."/>
            <person name="Pollard M."/>
            <person name="Popkie A.P."/>
            <person name="Predki P."/>
            <person name="Quan G."/>
            <person name="Ramirez L."/>
            <person name="Rash S."/>
            <person name="Retterer J."/>
            <person name="Rodriguez A."/>
            <person name="Rogers S."/>
            <person name="Salamov A."/>
            <person name="Salazar A."/>
            <person name="She X."/>
            <person name="Smith D."/>
            <person name="Slezak T."/>
            <person name="Solovyev V."/>
            <person name="Thayer N."/>
            <person name="Tice H."/>
            <person name="Tsai M."/>
            <person name="Ustaszewska A."/>
            <person name="Vo N."/>
            <person name="Wagner M."/>
            <person name="Wheeler J."/>
            <person name="Wu K."/>
            <person name="Xie G."/>
            <person name="Yang J."/>
            <person name="Dubchak I."/>
            <person name="Furey T.S."/>
            <person name="DeJong P."/>
            <person name="Dickson M."/>
            <person name="Gordon D."/>
            <person name="Eichler E.E."/>
            <person name="Pennacchio L.A."/>
            <person name="Richardson P."/>
            <person name="Stubbs L."/>
            <person name="Rokhsar D.S."/>
            <person name="Myers R.M."/>
            <person name="Rubin E.M."/>
            <person name="Lucas S.M."/>
        </authorList>
    </citation>
    <scope>NUCLEOTIDE SEQUENCE [LARGE SCALE GENOMIC DNA]</scope>
</reference>
<reference key="9">
    <citation type="submission" date="2005-09" db="EMBL/GenBank/DDBJ databases">
        <authorList>
            <person name="Mural R.J."/>
            <person name="Istrail S."/>
            <person name="Sutton G.G."/>
            <person name="Florea L."/>
            <person name="Halpern A.L."/>
            <person name="Mobarry C.M."/>
            <person name="Lippert R."/>
            <person name="Walenz B."/>
            <person name="Shatkay H."/>
            <person name="Dew I."/>
            <person name="Miller J.R."/>
            <person name="Flanigan M.J."/>
            <person name="Edwards N.J."/>
            <person name="Bolanos R."/>
            <person name="Fasulo D."/>
            <person name="Halldorsson B.V."/>
            <person name="Hannenhalli S."/>
            <person name="Turner R."/>
            <person name="Yooseph S."/>
            <person name="Lu F."/>
            <person name="Nusskern D.R."/>
            <person name="Shue B.C."/>
            <person name="Zheng X.H."/>
            <person name="Zhong F."/>
            <person name="Delcher A.L."/>
            <person name="Huson D.H."/>
            <person name="Kravitz S.A."/>
            <person name="Mouchard L."/>
            <person name="Reinert K."/>
            <person name="Remington K.A."/>
            <person name="Clark A.G."/>
            <person name="Waterman M.S."/>
            <person name="Eichler E.E."/>
            <person name="Adams M.D."/>
            <person name="Hunkapiller M.W."/>
            <person name="Myers E.W."/>
            <person name="Venter J.C."/>
        </authorList>
    </citation>
    <scope>NUCLEOTIDE SEQUENCE [LARGE SCALE GENOMIC DNA]</scope>
</reference>
<reference key="10">
    <citation type="journal article" date="2004" name="Genome Res.">
        <title>The status, quality, and expansion of the NIH full-length cDNA project: the Mammalian Gene Collection (MGC).</title>
        <authorList>
            <consortium name="The MGC Project Team"/>
        </authorList>
    </citation>
    <scope>NUCLEOTIDE SEQUENCE [LARGE SCALE MRNA] (ISOFORM 1)</scope>
    <source>
        <tissue>Brain</tissue>
        <tissue>Kidney</tissue>
    </source>
</reference>
<reference key="11">
    <citation type="journal article" date="2004" name="Protein Sci.">
        <title>Signal peptide prediction based on analysis of experimentally verified cleavage sites.</title>
        <authorList>
            <person name="Zhang Z."/>
            <person name="Henzel W.J."/>
        </authorList>
    </citation>
    <scope>PROTEIN SEQUENCE OF 36-50</scope>
</reference>
<reference key="12">
    <citation type="journal article" date="2001" name="J. Immunol.">
        <title>The distinct roles of T cell-derived cytokines and a novel follicular dendritic cell-signaling molecule 8D6 in germinal center-B cell differentiation.</title>
        <authorList>
            <person name="Zhang X."/>
            <person name="Li L."/>
            <person name="Jung J."/>
            <person name="Xiang S."/>
            <person name="Hollmann C."/>
            <person name="Choi Y.S."/>
        </authorList>
    </citation>
    <scope>FUNCTION</scope>
    <scope>SUBCELLULAR LOCATION</scope>
    <scope>TISSUE SPECIFICITY</scope>
</reference>
<reference key="13">
    <citation type="journal article" date="2009" name="Blood">
        <title>The protein and the gene encoding the receptor for the cellular uptake of transcobalamin-bound cobalamin.</title>
        <authorList>
            <person name="Quadros E.V."/>
            <person name="Nakayama Y."/>
            <person name="Sequeira J.M."/>
        </authorList>
    </citation>
    <scope>FUNCTION AS A RECEPTOR FOR TRANSCOBALAMIN</scope>
    <scope>SUBCELLULAR LOCATION</scope>
</reference>
<reference key="14">
    <citation type="journal article" date="2010" name="Hum. Mutat.">
        <title>Positive newborn screen for methylmalonic aciduria identifies the first mutation in TCblR/CD320, the gene for cellular uptake of transcobalamin-bound vitamin B(12).</title>
        <authorList>
            <person name="Quadros E.V."/>
            <person name="Lai S.-C."/>
            <person name="Nakayama Y."/>
            <person name="Sequeira J.M."/>
            <person name="Hannibal L."/>
            <person name="Wang S."/>
            <person name="Jacobsen D.W."/>
            <person name="Fedosov S."/>
            <person name="Wright E."/>
            <person name="Gallagher R.C."/>
            <person name="Anastasio N."/>
            <person name="Watkins D."/>
            <person name="Rosenblatt D.S."/>
        </authorList>
    </citation>
    <scope>FUNCTION</scope>
    <scope>INVOLVEMENT IN MATR</scope>
    <scope>VARIANT MATR GLU-88 DEL</scope>
    <scope>CHARACTERIZATION OF VARIANT MATR GLU-88 DEL</scope>
    <scope>VARIANTS GLY-142 AND ARG-220</scope>
</reference>
<reference evidence="20 21" key="15">
    <citation type="journal article" date="2016" name="Nat. Commun.">
        <title>Structural basis of transcobalamin recognition by human CD320 receptor.</title>
        <authorList>
            <person name="Alam A."/>
            <person name="Woo J.S."/>
            <person name="Schmitz J."/>
            <person name="Prinz B."/>
            <person name="Root K."/>
            <person name="Chen F."/>
            <person name="Bloch J.S."/>
            <person name="Zenobi R."/>
            <person name="Locher K.P."/>
        </authorList>
    </citation>
    <scope>X-RAY CRYSTALLOGRAPHY (2.10 ANGSTROMS) OF 53-171 OF WILD-TYPE AND VARIANT MATR GLU-88 DEL IN COMPLEX WITH TCN2 AND CALCIUM</scope>
    <scope>INTERACTION WITH TCN2</scope>
    <scope>DISULFIDE BONDS</scope>
    <scope>CHARACTERIZATION OF VARIANT MATR GLU-88 DEL</scope>
</reference>
<reference key="16">
    <citation type="journal article" date="2012" name="J. AAPOS">
        <title>Bilateral central retinal artery occlusions in an infant with hyperhomocysteinemia.</title>
        <authorList>
            <person name="Karth P."/>
            <person name="Singh R."/>
            <person name="Kim J."/>
            <person name="Costakos D."/>
        </authorList>
    </citation>
    <scope>VARIANT MATR GLU-88 DEL</scope>
</reference>
<reference key="17">
    <citation type="journal article" date="2016" name="Nature">
        <title>Analysis of protein-coding genetic variation in 60,706 humans.</title>
        <authorList>
            <consortium name="Exome Aggregation Consortium"/>
            <person name="Lek M."/>
            <person name="Karczewski K.J."/>
            <person name="Minikel E.V."/>
            <person name="Samocha K.E."/>
            <person name="Banks E."/>
            <person name="Fennell T."/>
            <person name="O'Donnell-Luria A.H."/>
            <person name="Ware J.S."/>
            <person name="Hill A.J."/>
            <person name="Cummings B.B."/>
            <person name="Tukiainen T."/>
            <person name="Birnbaum D.P."/>
            <person name="Kosmicki J.A."/>
            <person name="Duncan L.E."/>
            <person name="Estrada K."/>
            <person name="Zhao F."/>
            <person name="Zou J."/>
            <person name="Pierce-Hoffman E."/>
            <person name="Berghout J."/>
            <person name="Cooper D.N."/>
            <person name="Deflaux N."/>
            <person name="DePristo M."/>
            <person name="Do R."/>
            <person name="Flannick J."/>
            <person name="Fromer M."/>
            <person name="Gauthier L."/>
            <person name="Goldstein J."/>
            <person name="Gupta N."/>
            <person name="Howrigan D."/>
            <person name="Kiezun A."/>
            <person name="Kurki M.I."/>
            <person name="Moonshine A.L."/>
            <person name="Natarajan P."/>
            <person name="Orozco L."/>
            <person name="Peloso G.M."/>
            <person name="Poplin R."/>
            <person name="Rivas M.A."/>
            <person name="Ruano-Rubio V."/>
            <person name="Rose S.A."/>
            <person name="Ruderfer D.M."/>
            <person name="Shakir K."/>
            <person name="Stenson P.D."/>
            <person name="Stevens C."/>
            <person name="Thomas B.P."/>
            <person name="Tiao G."/>
            <person name="Tusie-Luna M.T."/>
            <person name="Weisburd B."/>
            <person name="Won H.H."/>
            <person name="Yu D."/>
            <person name="Altshuler D.M."/>
            <person name="Ardissino D."/>
            <person name="Boehnke M."/>
            <person name="Danesh J."/>
            <person name="Donnelly S."/>
            <person name="Elosua R."/>
            <person name="Florez J.C."/>
            <person name="Gabriel S.B."/>
            <person name="Getz G."/>
            <person name="Glatt S.J."/>
            <person name="Hultman C.M."/>
            <person name="Kathiresan S."/>
            <person name="Laakso M."/>
            <person name="McCarroll S."/>
            <person name="McCarthy M.I."/>
            <person name="McGovern D."/>
            <person name="McPherson R."/>
            <person name="Neale B.M."/>
            <person name="Palotie A."/>
            <person name="Purcell S.M."/>
            <person name="Saleheen D."/>
            <person name="Scharf J.M."/>
            <person name="Sklar P."/>
            <person name="Sullivan P.F."/>
            <person name="Tuomilehto J."/>
            <person name="Tsuang M.T."/>
            <person name="Watkins H.C."/>
            <person name="Wilson J.G."/>
            <person name="Daly M.J."/>
            <person name="MacArthur D.G."/>
        </authorList>
    </citation>
    <scope>VARIANT MATR GLU-88 DEL</scope>
</reference>